<protein>
    <recommendedName>
        <fullName>Indolepyruvate oxidoreductase subunit IorB</fullName>
        <shortName>IOR</shortName>
        <ecNumber>1.2.7.8</ecNumber>
    </recommendedName>
    <alternativeName>
        <fullName>Indolepyruvate ferredoxin oxidoreductase subunit beta</fullName>
    </alternativeName>
</protein>
<keyword id="KW-0560">Oxidoreductase</keyword>
<keyword id="KW-1185">Reference proteome</keyword>
<proteinExistence type="evidence at protein level"/>
<dbReference type="EC" id="1.2.7.8"/>
<dbReference type="EMBL" id="D86221">
    <property type="protein sequence ID" value="BAA20529.1"/>
    <property type="status" value="ALT_FRAME"/>
    <property type="molecule type" value="Genomic_DNA"/>
</dbReference>
<dbReference type="EMBL" id="AP006878">
    <property type="protein sequence ID" value="BAD84324.1"/>
    <property type="molecule type" value="Genomic_DNA"/>
</dbReference>
<dbReference type="RefSeq" id="WP_011249090.1">
    <property type="nucleotide sequence ID" value="NC_006624.1"/>
</dbReference>
<dbReference type="SMR" id="O07836"/>
<dbReference type="STRING" id="69014.TK0135"/>
<dbReference type="EnsemblBacteria" id="BAD84324">
    <property type="protein sequence ID" value="BAD84324"/>
    <property type="gene ID" value="TK0135"/>
</dbReference>
<dbReference type="GeneID" id="78446640"/>
<dbReference type="KEGG" id="tko:TK0135"/>
<dbReference type="PATRIC" id="fig|69014.16.peg.135"/>
<dbReference type="eggNOG" id="arCOG01602">
    <property type="taxonomic scope" value="Archaea"/>
</dbReference>
<dbReference type="HOGENOM" id="CLU_087284_1_1_2"/>
<dbReference type="InParanoid" id="O07836"/>
<dbReference type="OrthoDB" id="53326at2157"/>
<dbReference type="PhylomeDB" id="O07836"/>
<dbReference type="BRENDA" id="1.2.7.8">
    <property type="organism ID" value="5246"/>
</dbReference>
<dbReference type="Proteomes" id="UP000000536">
    <property type="component" value="Chromosome"/>
</dbReference>
<dbReference type="GO" id="GO:0043805">
    <property type="term" value="F:indolepyruvate ferredoxin oxidoreductase activity"/>
    <property type="evidence" value="ECO:0007669"/>
    <property type="project" value="UniProtKB-EC"/>
</dbReference>
<dbReference type="Gene3D" id="3.40.920.10">
    <property type="entry name" value="Pyruvate-ferredoxin oxidoreductase, PFOR, domain III"/>
    <property type="match status" value="1"/>
</dbReference>
<dbReference type="InterPro" id="IPR017719">
    <property type="entry name" value="Indolepyruvate_Fd_OxRdtase_bsu"/>
</dbReference>
<dbReference type="InterPro" id="IPR052198">
    <property type="entry name" value="IorB_Oxidoreductase"/>
</dbReference>
<dbReference type="InterPro" id="IPR019752">
    <property type="entry name" value="Pyrv/ketoisovalerate_OxRed_cat"/>
</dbReference>
<dbReference type="InterPro" id="IPR002869">
    <property type="entry name" value="Pyrv_flavodox_OxRed_cen"/>
</dbReference>
<dbReference type="NCBIfam" id="TIGR03334">
    <property type="entry name" value="IOR_beta"/>
    <property type="match status" value="1"/>
</dbReference>
<dbReference type="NCBIfam" id="NF005326">
    <property type="entry name" value="PRK06853.1-6"/>
    <property type="match status" value="1"/>
</dbReference>
<dbReference type="PANTHER" id="PTHR43854">
    <property type="entry name" value="INDOLEPYRUVATE OXIDOREDUCTASE SUBUNIT IORB"/>
    <property type="match status" value="1"/>
</dbReference>
<dbReference type="PANTHER" id="PTHR43854:SF1">
    <property type="entry name" value="INDOLEPYRUVATE OXIDOREDUCTASE SUBUNIT IORB"/>
    <property type="match status" value="1"/>
</dbReference>
<dbReference type="Pfam" id="PF01558">
    <property type="entry name" value="POR"/>
    <property type="match status" value="1"/>
</dbReference>
<dbReference type="SUPFAM" id="SSF53323">
    <property type="entry name" value="Pyruvate-ferredoxin oxidoreductase, PFOR, domain III"/>
    <property type="match status" value="1"/>
</dbReference>
<gene>
    <name type="primary">iorB</name>
    <name type="ordered locus">TK0135</name>
</gene>
<sequence>MKEYNIVITGVGGQGILTAANLLGWAALRAGYKVRVGEVHGMSQRFGSVIAYVRFGEDVYGAMVPEGKADVILSFEPVEALRYINYLKKGGLVFTNARPIPPVQVSMGLATYPTLDEMKKIVEEDFGGKFMAFDAEKLAMEAGNIVTTNVVLIGALSQTPGFPLSEEQIKEVIRISVPPKTIDVNMRAFELGVKAAKEMLGL</sequence>
<name>IORB_THEKO</name>
<accession>O07836</accession>
<accession>Q5JFI1</accession>
<reference key="1">
    <citation type="journal article" date="1997" name="Mol. Gen. Genet.">
        <title>Indolepyruvate ferredoxin oxidoreductase from Pyrococcus sp. KOD1 possesses a mosaic structure showing features of various oxidoreductases.</title>
        <authorList>
            <person name="Siddiqui M.A."/>
            <person name="Fujiwara S."/>
            <person name="Imanaka T."/>
        </authorList>
    </citation>
    <scope>NUCLEOTIDE SEQUENCE [GENOMIC DNA]</scope>
    <source>
        <strain>ATCC BAA-918 / JCM 12380 / KOD1</strain>
    </source>
</reference>
<reference key="2">
    <citation type="journal article" date="2005" name="Genome Res.">
        <title>Complete genome sequence of the hyperthermophilic archaeon Thermococcus kodakaraensis KOD1 and comparison with Pyrococcus genomes.</title>
        <authorList>
            <person name="Fukui T."/>
            <person name="Atomi H."/>
            <person name="Kanai T."/>
            <person name="Matsumi R."/>
            <person name="Fujiwara S."/>
            <person name="Imanaka T."/>
        </authorList>
    </citation>
    <scope>NUCLEOTIDE SEQUENCE [LARGE SCALE GENOMIC DNA]</scope>
    <source>
        <strain>ATCC BAA-918 / JCM 12380 / KOD1</strain>
    </source>
</reference>
<feature type="chain" id="PRO_0000099936" description="Indolepyruvate oxidoreductase subunit IorB">
    <location>
        <begin position="1"/>
        <end position="202"/>
    </location>
</feature>
<feature type="sequence conflict" description="In Ref. 1; BAA20529." evidence="1" ref="1">
    <original>Q</original>
    <variation>K</variation>
    <location>
        <position position="158"/>
    </location>
</feature>
<feature type="sequence conflict" description="In Ref. 1; BAA20529." evidence="1" ref="1">
    <original>A</original>
    <variation>S</variation>
    <location>
        <position position="188"/>
    </location>
</feature>
<evidence type="ECO:0000305" key="1"/>
<organism>
    <name type="scientific">Thermococcus kodakarensis (strain ATCC BAA-918 / JCM 12380 / KOD1)</name>
    <name type="common">Pyrococcus kodakaraensis (strain KOD1)</name>
    <dbReference type="NCBI Taxonomy" id="69014"/>
    <lineage>
        <taxon>Archaea</taxon>
        <taxon>Methanobacteriati</taxon>
        <taxon>Methanobacteriota</taxon>
        <taxon>Thermococci</taxon>
        <taxon>Thermococcales</taxon>
        <taxon>Thermococcaceae</taxon>
        <taxon>Thermococcus</taxon>
    </lineage>
</organism>
<comment type="function">
    <text>Catalyzes the ferredoxin-dependent oxidative decarboxylation of arylpyruvates.</text>
</comment>
<comment type="catalytic activity">
    <reaction>
        <text>indole-3-pyruvate + 2 oxidized [2Fe-2S]-[ferredoxin] + CoA = (indol-3-yl)acetyl-CoA + 2 reduced [2Fe-2S]-[ferredoxin] + CO2 + H(+)</text>
        <dbReference type="Rhea" id="RHEA:12645"/>
        <dbReference type="Rhea" id="RHEA-COMP:10000"/>
        <dbReference type="Rhea" id="RHEA-COMP:10001"/>
        <dbReference type="ChEBI" id="CHEBI:15378"/>
        <dbReference type="ChEBI" id="CHEBI:16526"/>
        <dbReference type="ChEBI" id="CHEBI:17640"/>
        <dbReference type="ChEBI" id="CHEBI:33737"/>
        <dbReference type="ChEBI" id="CHEBI:33738"/>
        <dbReference type="ChEBI" id="CHEBI:57271"/>
        <dbReference type="ChEBI" id="CHEBI:57287"/>
        <dbReference type="EC" id="1.2.7.8"/>
    </reaction>
</comment>
<comment type="biophysicochemical properties">
    <temperatureDependence>
        <text>Optimum temperature is 70 degrees Celsius.</text>
    </temperatureDependence>
</comment>
<comment type="subunit">
    <text>Heterodimer of the IorA and IorB subunits.</text>
</comment>
<comment type="sequence caution" evidence="1">
    <conflict type="frameshift">
        <sequence resource="EMBL-CDS" id="BAA20529"/>
    </conflict>
</comment>